<protein>
    <recommendedName>
        <fullName evidence="1">ATP-dependent Clp protease proteolytic subunit</fullName>
        <ecNumber evidence="1">3.4.21.92</ecNumber>
    </recommendedName>
    <alternativeName>
        <fullName evidence="1">Endopeptidase Clp</fullName>
    </alternativeName>
</protein>
<geneLocation type="chloroplast"/>
<proteinExistence type="inferred from homology"/>
<accession>Q09MF2</accession>
<name>CLPP_CITSI</name>
<reference key="1">
    <citation type="journal article" date="2006" name="BMC Plant Biol.">
        <title>The complete chloroplast genome sequence of Citrus sinensis (L.) Osbeck var 'Ridge Pineapple': organization and phylogenetic relationships to other angiosperms.</title>
        <authorList>
            <person name="Bausher M.G."/>
            <person name="Singh N.D."/>
            <person name="Lee S.-B."/>
            <person name="Jansen R.K."/>
            <person name="Daniell H."/>
        </authorList>
    </citation>
    <scope>NUCLEOTIDE SEQUENCE [LARGE SCALE GENOMIC DNA]</scope>
    <source>
        <strain>cv. Osbeck var. Ridge Pineapple</strain>
    </source>
</reference>
<comment type="function">
    <text evidence="1">Cleaves peptides in various proteins in a process that requires ATP hydrolysis. Has a chymotrypsin-like activity. Plays a major role in the degradation of misfolded proteins.</text>
</comment>
<comment type="catalytic activity">
    <reaction evidence="1">
        <text>Hydrolysis of proteins to small peptides in the presence of ATP and magnesium. alpha-casein is the usual test substrate. In the absence of ATP, only oligopeptides shorter than five residues are hydrolyzed (such as succinyl-Leu-Tyr-|-NHMec, and Leu-Tyr-Leu-|-Tyr-Trp, in which cleavage of the -Tyr-|-Leu- and -Tyr-|-Trp bonds also occurs).</text>
        <dbReference type="EC" id="3.4.21.92"/>
    </reaction>
</comment>
<comment type="subunit">
    <text>Component of the chloroplastic Clp protease core complex.</text>
</comment>
<comment type="subcellular location">
    <subcellularLocation>
        <location evidence="1">Plastid</location>
        <location evidence="1">Chloroplast stroma</location>
    </subcellularLocation>
</comment>
<comment type="similarity">
    <text evidence="1">Belongs to the peptidase S14 family.</text>
</comment>
<keyword id="KW-0150">Chloroplast</keyword>
<keyword id="KW-0378">Hydrolase</keyword>
<keyword id="KW-0934">Plastid</keyword>
<keyword id="KW-0645">Protease</keyword>
<keyword id="KW-0720">Serine protease</keyword>
<evidence type="ECO:0000255" key="1">
    <source>
        <dbReference type="HAMAP-Rule" id="MF_00444"/>
    </source>
</evidence>
<sequence length="196" mass="21912">MPIGVPKVPYRSPGDKHPSWVDIYNRLYRERLLFLGQMVESDISNQLIGIMVYLSIENETKDLYLFINSPGGWVIPGIAIYDTMQFVRPDVQTICMGLAASMGSFLLAAGASTKRLAFPHARVMIHQPIGAFYGAQTGEFILDTEELLRLREILTMVYVQRSGKPLWVVSEDMERDTFMSATEAQAHGLVDLVAVG</sequence>
<dbReference type="EC" id="3.4.21.92" evidence="1"/>
<dbReference type="EMBL" id="DQ864733">
    <property type="protein sequence ID" value="ABI49044.1"/>
    <property type="molecule type" value="Genomic_DNA"/>
</dbReference>
<dbReference type="RefSeq" id="YP_740501.1">
    <property type="nucleotide sequence ID" value="NC_008334.1"/>
</dbReference>
<dbReference type="SMR" id="Q09MF2"/>
<dbReference type="MEROPS" id="S14.002"/>
<dbReference type="GeneID" id="4271124"/>
<dbReference type="KEGG" id="cit:4271124"/>
<dbReference type="OrthoDB" id="923401at71240"/>
<dbReference type="GO" id="GO:0009570">
    <property type="term" value="C:chloroplast stroma"/>
    <property type="evidence" value="ECO:0007669"/>
    <property type="project" value="UniProtKB-SubCell"/>
</dbReference>
<dbReference type="GO" id="GO:0004176">
    <property type="term" value="F:ATP-dependent peptidase activity"/>
    <property type="evidence" value="ECO:0007669"/>
    <property type="project" value="InterPro"/>
</dbReference>
<dbReference type="GO" id="GO:0004252">
    <property type="term" value="F:serine-type endopeptidase activity"/>
    <property type="evidence" value="ECO:0007669"/>
    <property type="project" value="UniProtKB-UniRule"/>
</dbReference>
<dbReference type="GO" id="GO:0006508">
    <property type="term" value="P:proteolysis"/>
    <property type="evidence" value="ECO:0007669"/>
    <property type="project" value="UniProtKB-UniRule"/>
</dbReference>
<dbReference type="CDD" id="cd07017">
    <property type="entry name" value="S14_ClpP_2"/>
    <property type="match status" value="1"/>
</dbReference>
<dbReference type="FunFam" id="3.90.226.10:FF:000006">
    <property type="entry name" value="ATP-dependent Clp protease proteolytic subunit"/>
    <property type="match status" value="1"/>
</dbReference>
<dbReference type="Gene3D" id="3.90.226.10">
    <property type="entry name" value="2-enoyl-CoA Hydratase, Chain A, domain 1"/>
    <property type="match status" value="1"/>
</dbReference>
<dbReference type="HAMAP" id="MF_00444">
    <property type="entry name" value="ClpP"/>
    <property type="match status" value="1"/>
</dbReference>
<dbReference type="InterPro" id="IPR001907">
    <property type="entry name" value="ClpP"/>
</dbReference>
<dbReference type="InterPro" id="IPR029045">
    <property type="entry name" value="ClpP/crotonase-like_dom_sf"/>
</dbReference>
<dbReference type="InterPro" id="IPR023562">
    <property type="entry name" value="ClpP/TepA"/>
</dbReference>
<dbReference type="InterPro" id="IPR033135">
    <property type="entry name" value="ClpP_His_AS"/>
</dbReference>
<dbReference type="InterPro" id="IPR018215">
    <property type="entry name" value="ClpP_Ser_AS"/>
</dbReference>
<dbReference type="PANTHER" id="PTHR10381">
    <property type="entry name" value="ATP-DEPENDENT CLP PROTEASE PROTEOLYTIC SUBUNIT"/>
    <property type="match status" value="1"/>
</dbReference>
<dbReference type="PANTHER" id="PTHR10381:SF15">
    <property type="entry name" value="CHLOROPLASTIC ATP-DEPENDENT CLP PROTEASE PROTEOLYTIC SUBUNIT 1"/>
    <property type="match status" value="1"/>
</dbReference>
<dbReference type="Pfam" id="PF00574">
    <property type="entry name" value="CLP_protease"/>
    <property type="match status" value="1"/>
</dbReference>
<dbReference type="PRINTS" id="PR00127">
    <property type="entry name" value="CLPPROTEASEP"/>
</dbReference>
<dbReference type="SUPFAM" id="SSF52096">
    <property type="entry name" value="ClpP/crotonase"/>
    <property type="match status" value="1"/>
</dbReference>
<dbReference type="PROSITE" id="PS00382">
    <property type="entry name" value="CLP_PROTEASE_HIS"/>
    <property type="match status" value="1"/>
</dbReference>
<dbReference type="PROSITE" id="PS00381">
    <property type="entry name" value="CLP_PROTEASE_SER"/>
    <property type="match status" value="1"/>
</dbReference>
<organism>
    <name type="scientific">Citrus sinensis</name>
    <name type="common">Sweet orange</name>
    <name type="synonym">Citrus aurantium var. sinensis</name>
    <dbReference type="NCBI Taxonomy" id="2711"/>
    <lineage>
        <taxon>Eukaryota</taxon>
        <taxon>Viridiplantae</taxon>
        <taxon>Streptophyta</taxon>
        <taxon>Embryophyta</taxon>
        <taxon>Tracheophyta</taxon>
        <taxon>Spermatophyta</taxon>
        <taxon>Magnoliopsida</taxon>
        <taxon>eudicotyledons</taxon>
        <taxon>Gunneridae</taxon>
        <taxon>Pentapetalae</taxon>
        <taxon>rosids</taxon>
        <taxon>malvids</taxon>
        <taxon>Sapindales</taxon>
        <taxon>Rutaceae</taxon>
        <taxon>Aurantioideae</taxon>
        <taxon>Citrus</taxon>
    </lineage>
</organism>
<feature type="chain" id="PRO_0000275279" description="ATP-dependent Clp protease proteolytic subunit">
    <location>
        <begin position="1"/>
        <end position="196"/>
    </location>
</feature>
<feature type="active site" description="Nucleophile" evidence="1">
    <location>
        <position position="101"/>
    </location>
</feature>
<feature type="active site" evidence="1">
    <location>
        <position position="126"/>
    </location>
</feature>
<gene>
    <name evidence="1" type="primary">clpP</name>
</gene>